<gene>
    <name evidence="1" type="primary">pagP</name>
    <name type="synonym">crcA</name>
    <name type="ordered locus">SBO_0487</name>
</gene>
<keyword id="KW-0012">Acyltransferase</keyword>
<keyword id="KW-0998">Cell outer membrane</keyword>
<keyword id="KW-0472">Membrane</keyword>
<keyword id="KW-0732">Signal</keyword>
<keyword id="KW-0808">Transferase</keyword>
<evidence type="ECO:0000255" key="1">
    <source>
        <dbReference type="HAMAP-Rule" id="MF_00837"/>
    </source>
</evidence>
<accession>Q324S0</accession>
<feature type="signal peptide" evidence="1">
    <location>
        <begin position="1"/>
        <end position="25"/>
    </location>
</feature>
<feature type="chain" id="PRO_0000414474" description="Lipid A acyltransferase PagP">
    <location>
        <begin position="26"/>
        <end position="186"/>
    </location>
</feature>
<feature type="active site" evidence="1">
    <location>
        <position position="58"/>
    </location>
</feature>
<feature type="active site" evidence="1">
    <location>
        <position position="101"/>
    </location>
</feature>
<feature type="active site" evidence="1">
    <location>
        <position position="102"/>
    </location>
</feature>
<feature type="site" description="Role in lipopolysaccharide recognition" evidence="1">
    <location>
        <position position="67"/>
    </location>
</feature>
<feature type="site" description="Role in the phospholipid gating" evidence="1">
    <location>
        <position position="172"/>
    </location>
</feature>
<comment type="function">
    <text evidence="1">Transfers a fatty acid residue from the sn-1 position of a phospholipid to the N-linked hydroxyfatty acid chain on the proximal unit of lipid A or its precursors.</text>
</comment>
<comment type="catalytic activity">
    <reaction evidence="1">
        <text>a lipid A + a 1,2-diacyl-sn-glycero-3-phosphocholine = a hepta-acyl lipid A + a 2-acyl-sn-glycero-3-phosphocholine</text>
        <dbReference type="Rhea" id="RHEA:74275"/>
        <dbReference type="ChEBI" id="CHEBI:57643"/>
        <dbReference type="ChEBI" id="CHEBI:57875"/>
        <dbReference type="ChEBI" id="CHEBI:193141"/>
        <dbReference type="ChEBI" id="CHEBI:193142"/>
        <dbReference type="EC" id="2.3.1.251"/>
    </reaction>
</comment>
<comment type="catalytic activity">
    <reaction evidence="1">
        <text>a lipid IVA + a 1,2-diacyl-sn-glycero-3-phosphocholine = a lipid IVB + a 2-acyl-sn-glycero-3-phosphocholine</text>
        <dbReference type="Rhea" id="RHEA:74279"/>
        <dbReference type="ChEBI" id="CHEBI:57643"/>
        <dbReference type="ChEBI" id="CHEBI:57875"/>
        <dbReference type="ChEBI" id="CHEBI:176425"/>
        <dbReference type="ChEBI" id="CHEBI:193143"/>
        <dbReference type="EC" id="2.3.1.251"/>
    </reaction>
</comment>
<comment type="catalytic activity">
    <reaction evidence="1">
        <text>a lipid IIA + a 1,2-diacyl-sn-glycero-3-phosphocholine = a lipid IIB + a 2-acyl-sn-glycero-3-phosphocholine</text>
        <dbReference type="Rhea" id="RHEA:74283"/>
        <dbReference type="ChEBI" id="CHEBI:57643"/>
        <dbReference type="ChEBI" id="CHEBI:57875"/>
        <dbReference type="ChEBI" id="CHEBI:193144"/>
        <dbReference type="ChEBI" id="CHEBI:193145"/>
        <dbReference type="EC" id="2.3.1.251"/>
    </reaction>
</comment>
<comment type="subunit">
    <text evidence="1">Homodimer.</text>
</comment>
<comment type="subcellular location">
    <subcellularLocation>
        <location evidence="1">Cell outer membrane</location>
    </subcellularLocation>
</comment>
<comment type="similarity">
    <text evidence="1">Belongs to the lipid A palmitoyltransferase family.</text>
</comment>
<protein>
    <recommendedName>
        <fullName evidence="1">Lipid A acyltransferase PagP</fullName>
        <ecNumber evidence="1">2.3.1.251</ecNumber>
    </recommendedName>
    <alternativeName>
        <fullName evidence="1">Lipid A acylation protein</fullName>
    </alternativeName>
</protein>
<organism>
    <name type="scientific">Shigella boydii serotype 4 (strain Sb227)</name>
    <dbReference type="NCBI Taxonomy" id="300268"/>
    <lineage>
        <taxon>Bacteria</taxon>
        <taxon>Pseudomonadati</taxon>
        <taxon>Pseudomonadota</taxon>
        <taxon>Gammaproteobacteria</taxon>
        <taxon>Enterobacterales</taxon>
        <taxon>Enterobacteriaceae</taxon>
        <taxon>Shigella</taxon>
    </lineage>
</organism>
<reference key="1">
    <citation type="journal article" date="2005" name="Nucleic Acids Res.">
        <title>Genome dynamics and diversity of Shigella species, the etiologic agents of bacillary dysentery.</title>
        <authorList>
            <person name="Yang F."/>
            <person name="Yang J."/>
            <person name="Zhang X."/>
            <person name="Chen L."/>
            <person name="Jiang Y."/>
            <person name="Yan Y."/>
            <person name="Tang X."/>
            <person name="Wang J."/>
            <person name="Xiong Z."/>
            <person name="Dong J."/>
            <person name="Xue Y."/>
            <person name="Zhu Y."/>
            <person name="Xu X."/>
            <person name="Sun L."/>
            <person name="Chen S."/>
            <person name="Nie H."/>
            <person name="Peng J."/>
            <person name="Xu J."/>
            <person name="Wang Y."/>
            <person name="Yuan Z."/>
            <person name="Wen Y."/>
            <person name="Yao Z."/>
            <person name="Shen Y."/>
            <person name="Qiang B."/>
            <person name="Hou Y."/>
            <person name="Yu J."/>
            <person name="Jin Q."/>
        </authorList>
    </citation>
    <scope>NUCLEOTIDE SEQUENCE [LARGE SCALE GENOMIC DNA]</scope>
    <source>
        <strain>Sb227</strain>
    </source>
</reference>
<name>PAGP_SHIBS</name>
<sequence length="186" mass="21781">MNVSKYVAIFSFVFIQLISVGKVFANADEWMTTFRENIAPTWQQPEHYDLYIPAITWHARFAYDKEKTDRYNERPWGVGFGLSRWDEKGNWHGLYAMAFKDSWNKWEPIAGYGWESTWRPLADENFHLGLGFTAGVTARDNWNYIPLPVLLPLASVGYGPVTFQMTYIPGTYNNGNVYFAWMRFQF</sequence>
<dbReference type="EC" id="2.3.1.251" evidence="1"/>
<dbReference type="EMBL" id="CP000036">
    <property type="protein sequence ID" value="ABB65188.1"/>
    <property type="molecule type" value="Genomic_DNA"/>
</dbReference>
<dbReference type="RefSeq" id="WP_011379118.1">
    <property type="nucleotide sequence ID" value="NC_007613.1"/>
</dbReference>
<dbReference type="SMR" id="Q324S0"/>
<dbReference type="KEGG" id="sbo:SBO_0487"/>
<dbReference type="HOGENOM" id="CLU_104099_0_0_6"/>
<dbReference type="Proteomes" id="UP000007067">
    <property type="component" value="Chromosome"/>
</dbReference>
<dbReference type="GO" id="GO:0009279">
    <property type="term" value="C:cell outer membrane"/>
    <property type="evidence" value="ECO:0007669"/>
    <property type="project" value="UniProtKB-SubCell"/>
</dbReference>
<dbReference type="GO" id="GO:0016746">
    <property type="term" value="F:acyltransferase activity"/>
    <property type="evidence" value="ECO:0007669"/>
    <property type="project" value="UniProtKB-UniRule"/>
</dbReference>
<dbReference type="GO" id="GO:0009245">
    <property type="term" value="P:lipid A biosynthetic process"/>
    <property type="evidence" value="ECO:0007669"/>
    <property type="project" value="UniProtKB-UniRule"/>
</dbReference>
<dbReference type="FunFam" id="2.40.160.20:FF:000002">
    <property type="entry name" value="Lipid A palmitoyltransferase PagP"/>
    <property type="match status" value="1"/>
</dbReference>
<dbReference type="Gene3D" id="2.40.160.20">
    <property type="match status" value="1"/>
</dbReference>
<dbReference type="HAMAP" id="MF_00837">
    <property type="entry name" value="PagP_transferase"/>
    <property type="match status" value="1"/>
</dbReference>
<dbReference type="InterPro" id="IPR009746">
    <property type="entry name" value="LipidA_acyl_PagP"/>
</dbReference>
<dbReference type="InterPro" id="IPR011250">
    <property type="entry name" value="OMP/PagP_b-brl"/>
</dbReference>
<dbReference type="NCBIfam" id="NF008271">
    <property type="entry name" value="PRK11045.1"/>
    <property type="match status" value="1"/>
</dbReference>
<dbReference type="Pfam" id="PF07017">
    <property type="entry name" value="PagP"/>
    <property type="match status" value="1"/>
</dbReference>
<dbReference type="SUPFAM" id="SSF56925">
    <property type="entry name" value="OMPA-like"/>
    <property type="match status" value="1"/>
</dbReference>
<proteinExistence type="inferred from homology"/>